<accession>A9N5A5</accession>
<comment type="function">
    <text evidence="1">Converts 2-succinyl-6-hydroxy-2,4-cyclohexadiene-1-carboxylate (SHCHC) to 2-succinylbenzoate (OSB).</text>
</comment>
<comment type="catalytic activity">
    <reaction evidence="1">
        <text>(1R,6R)-6-hydroxy-2-succinyl-cyclohexa-2,4-diene-1-carboxylate = 2-succinylbenzoate + H2O</text>
        <dbReference type="Rhea" id="RHEA:10196"/>
        <dbReference type="ChEBI" id="CHEBI:15377"/>
        <dbReference type="ChEBI" id="CHEBI:18325"/>
        <dbReference type="ChEBI" id="CHEBI:58689"/>
        <dbReference type="EC" id="4.2.1.113"/>
    </reaction>
</comment>
<comment type="cofactor">
    <cofactor evidence="1">
        <name>a divalent metal cation</name>
        <dbReference type="ChEBI" id="CHEBI:60240"/>
    </cofactor>
</comment>
<comment type="pathway">
    <text evidence="1">Quinol/quinone metabolism; 1,4-dihydroxy-2-naphthoate biosynthesis; 1,4-dihydroxy-2-naphthoate from chorismate: step 4/7.</text>
</comment>
<comment type="pathway">
    <text evidence="1">Quinol/quinone metabolism; menaquinone biosynthesis.</text>
</comment>
<comment type="similarity">
    <text evidence="1">Belongs to the mandelate racemase/muconate lactonizing enzyme family. MenC type 1 subfamily.</text>
</comment>
<organism>
    <name type="scientific">Salmonella paratyphi B (strain ATCC BAA-1250 / SPB7)</name>
    <dbReference type="NCBI Taxonomy" id="1016998"/>
    <lineage>
        <taxon>Bacteria</taxon>
        <taxon>Pseudomonadati</taxon>
        <taxon>Pseudomonadota</taxon>
        <taxon>Gammaproteobacteria</taxon>
        <taxon>Enterobacterales</taxon>
        <taxon>Enterobacteriaceae</taxon>
        <taxon>Salmonella</taxon>
    </lineage>
</organism>
<gene>
    <name evidence="1" type="primary">menC</name>
    <name type="ordered locus">SPAB_00675</name>
</gene>
<name>MENC_SALPB</name>
<sequence length="320" mass="35306">MRSAQVYRWQIPMDAGVVLRDRRLKTRDGLYVCLCDGEREGWGEISPLPGFSQETWEEAQTALLTWVNDWLQGNEGLPEMPSVAFGASCALAELTGVLPEAADYRAAPLCTGDPDDLVLRLADMPGEKIAKVKVGLYEAVRDGMVVNLLLEAIPDLHLRLDANRAWTPLKAQQFAKYVNPDYRARIAFLEEPCKTRDDSRAFARETGIAIAWDESLREADFTFEAEEGVKAVVIKPTLTGSLDKVREQVAAAHALGLTVVISSSIESSLGLTQLARIAAWLTPGTLPGLDTLHLMQAQQVRPWPGSALPCLKRDELERLL</sequence>
<feature type="chain" id="PRO_1000081205" description="o-succinylbenzoate synthase">
    <location>
        <begin position="1"/>
        <end position="320"/>
    </location>
</feature>
<feature type="active site" description="Proton donor" evidence="1">
    <location>
        <position position="133"/>
    </location>
</feature>
<feature type="active site" description="Proton acceptor" evidence="1">
    <location>
        <position position="235"/>
    </location>
</feature>
<feature type="binding site" evidence="1">
    <location>
        <position position="161"/>
    </location>
    <ligand>
        <name>Mg(2+)</name>
        <dbReference type="ChEBI" id="CHEBI:18420"/>
    </ligand>
</feature>
<feature type="binding site" evidence="1">
    <location>
        <position position="190"/>
    </location>
    <ligand>
        <name>Mg(2+)</name>
        <dbReference type="ChEBI" id="CHEBI:18420"/>
    </ligand>
</feature>
<feature type="binding site" evidence="1">
    <location>
        <position position="213"/>
    </location>
    <ligand>
        <name>Mg(2+)</name>
        <dbReference type="ChEBI" id="CHEBI:18420"/>
    </ligand>
</feature>
<dbReference type="EC" id="4.2.1.113" evidence="1"/>
<dbReference type="EMBL" id="CP000886">
    <property type="protein sequence ID" value="ABX66101.1"/>
    <property type="molecule type" value="Genomic_DNA"/>
</dbReference>
<dbReference type="RefSeq" id="WP_001255545.1">
    <property type="nucleotide sequence ID" value="NC_010102.1"/>
</dbReference>
<dbReference type="SMR" id="A9N5A5"/>
<dbReference type="KEGG" id="spq:SPAB_00675"/>
<dbReference type="PATRIC" id="fig|1016998.12.peg.635"/>
<dbReference type="HOGENOM" id="CLU_030273_0_1_6"/>
<dbReference type="BioCyc" id="SENT1016998:SPAB_RS02805-MONOMER"/>
<dbReference type="UniPathway" id="UPA00079"/>
<dbReference type="UniPathway" id="UPA01057">
    <property type="reaction ID" value="UER00165"/>
</dbReference>
<dbReference type="Proteomes" id="UP000008556">
    <property type="component" value="Chromosome"/>
</dbReference>
<dbReference type="GO" id="GO:0000287">
    <property type="term" value="F:magnesium ion binding"/>
    <property type="evidence" value="ECO:0007669"/>
    <property type="project" value="UniProtKB-UniRule"/>
</dbReference>
<dbReference type="GO" id="GO:0043748">
    <property type="term" value="F:O-succinylbenzoate synthase activity"/>
    <property type="evidence" value="ECO:0007669"/>
    <property type="project" value="UniProtKB-EC"/>
</dbReference>
<dbReference type="GO" id="GO:0009234">
    <property type="term" value="P:menaquinone biosynthetic process"/>
    <property type="evidence" value="ECO:0007669"/>
    <property type="project" value="UniProtKB-UniRule"/>
</dbReference>
<dbReference type="CDD" id="cd03320">
    <property type="entry name" value="OSBS"/>
    <property type="match status" value="1"/>
</dbReference>
<dbReference type="FunFam" id="3.20.20.120:FF:000006">
    <property type="entry name" value="o-succinylbenzoate synthase"/>
    <property type="match status" value="1"/>
</dbReference>
<dbReference type="Gene3D" id="3.20.20.120">
    <property type="entry name" value="Enolase-like C-terminal domain"/>
    <property type="match status" value="1"/>
</dbReference>
<dbReference type="Gene3D" id="3.30.390.10">
    <property type="entry name" value="Enolase-like, N-terminal domain"/>
    <property type="match status" value="1"/>
</dbReference>
<dbReference type="HAMAP" id="MF_00470">
    <property type="entry name" value="MenC_1"/>
    <property type="match status" value="1"/>
</dbReference>
<dbReference type="InterPro" id="IPR036849">
    <property type="entry name" value="Enolase-like_C_sf"/>
</dbReference>
<dbReference type="InterPro" id="IPR029017">
    <property type="entry name" value="Enolase-like_N"/>
</dbReference>
<dbReference type="InterPro" id="IPR029065">
    <property type="entry name" value="Enolase_C-like"/>
</dbReference>
<dbReference type="InterPro" id="IPR013342">
    <property type="entry name" value="Mandelate_racemase_C"/>
</dbReference>
<dbReference type="InterPro" id="IPR010196">
    <property type="entry name" value="OSB_synthase_MenC1"/>
</dbReference>
<dbReference type="InterPro" id="IPR041338">
    <property type="entry name" value="OSBS_N"/>
</dbReference>
<dbReference type="NCBIfam" id="TIGR01927">
    <property type="entry name" value="menC_gam_Gplu"/>
    <property type="match status" value="1"/>
</dbReference>
<dbReference type="NCBIfam" id="NF003473">
    <property type="entry name" value="PRK05105.1"/>
    <property type="match status" value="1"/>
</dbReference>
<dbReference type="PANTHER" id="PTHR48073:SF2">
    <property type="entry name" value="O-SUCCINYLBENZOATE SYNTHASE"/>
    <property type="match status" value="1"/>
</dbReference>
<dbReference type="PANTHER" id="PTHR48073">
    <property type="entry name" value="O-SUCCINYLBENZOATE SYNTHASE-RELATED"/>
    <property type="match status" value="1"/>
</dbReference>
<dbReference type="Pfam" id="PF21508">
    <property type="entry name" value="MenC_N"/>
    <property type="match status" value="1"/>
</dbReference>
<dbReference type="Pfam" id="PF13378">
    <property type="entry name" value="MR_MLE_C"/>
    <property type="match status" value="1"/>
</dbReference>
<dbReference type="SFLD" id="SFLDS00001">
    <property type="entry name" value="Enolase"/>
    <property type="match status" value="1"/>
</dbReference>
<dbReference type="SFLD" id="SFLDF00009">
    <property type="entry name" value="o-succinylbenzoate_synthase"/>
    <property type="match status" value="1"/>
</dbReference>
<dbReference type="SMART" id="SM00922">
    <property type="entry name" value="MR_MLE"/>
    <property type="match status" value="1"/>
</dbReference>
<dbReference type="SUPFAM" id="SSF51604">
    <property type="entry name" value="Enolase C-terminal domain-like"/>
    <property type="match status" value="1"/>
</dbReference>
<dbReference type="SUPFAM" id="SSF54826">
    <property type="entry name" value="Enolase N-terminal domain-like"/>
    <property type="match status" value="1"/>
</dbReference>
<keyword id="KW-0456">Lyase</keyword>
<keyword id="KW-0460">Magnesium</keyword>
<keyword id="KW-0474">Menaquinone biosynthesis</keyword>
<keyword id="KW-0479">Metal-binding</keyword>
<proteinExistence type="inferred from homology"/>
<evidence type="ECO:0000255" key="1">
    <source>
        <dbReference type="HAMAP-Rule" id="MF_00470"/>
    </source>
</evidence>
<protein>
    <recommendedName>
        <fullName evidence="1">o-succinylbenzoate synthase</fullName>
        <shortName evidence="1">OSB synthase</shortName>
        <shortName evidence="1">OSBS</shortName>
        <ecNumber evidence="1">4.2.1.113</ecNumber>
    </recommendedName>
    <alternativeName>
        <fullName evidence="1">4-(2'-carboxyphenyl)-4-oxybutyric acid synthase</fullName>
    </alternativeName>
    <alternativeName>
        <fullName evidence="1">o-succinylbenzoic acid synthase</fullName>
    </alternativeName>
</protein>
<reference key="1">
    <citation type="submission" date="2007-11" db="EMBL/GenBank/DDBJ databases">
        <authorList>
            <consortium name="The Salmonella enterica serovar Paratyphi B Genome Sequencing Project"/>
            <person name="McClelland M."/>
            <person name="Sanderson E.K."/>
            <person name="Porwollik S."/>
            <person name="Spieth J."/>
            <person name="Clifton W.S."/>
            <person name="Fulton R."/>
            <person name="Cordes M."/>
            <person name="Wollam A."/>
            <person name="Shah N."/>
            <person name="Pepin K."/>
            <person name="Bhonagiri V."/>
            <person name="Nash W."/>
            <person name="Johnson M."/>
            <person name="Thiruvilangam P."/>
            <person name="Wilson R."/>
        </authorList>
    </citation>
    <scope>NUCLEOTIDE SEQUENCE [LARGE SCALE GENOMIC DNA]</scope>
    <source>
        <strain>ATCC BAA-1250 / SPB7</strain>
    </source>
</reference>